<protein>
    <recommendedName>
        <fullName>Beta-1,3-galactosyltransferase 5</fullName>
        <shortName>Beta-1,3-GalTase 5</shortName>
        <shortName>Beta3Gal-T5</shortName>
        <shortName>Beta3GalT5</shortName>
        <shortName>b3Gal-T5</shortName>
        <ecNumber>2.4.1.-</ecNumber>
    </recommendedName>
    <alternativeName>
        <fullName>Beta-3-Gx-T5</fullName>
    </alternativeName>
    <alternativeName>
        <fullName>UDP-Gal:beta-GlcNAc beta-1,3-galactosyltransferase 5</fullName>
    </alternativeName>
    <alternativeName>
        <fullName>UDP-galactose:beta-N-acetylglucosamine beta-1,3-galactosyltransferase 5</fullName>
    </alternativeName>
</protein>
<keyword id="KW-0325">Glycoprotein</keyword>
<keyword id="KW-0328">Glycosyltransferase</keyword>
<keyword id="KW-0333">Golgi apparatus</keyword>
<keyword id="KW-0443">Lipid metabolism</keyword>
<keyword id="KW-0472">Membrane</keyword>
<keyword id="KW-1185">Reference proteome</keyword>
<keyword id="KW-0735">Signal-anchor</keyword>
<keyword id="KW-0808">Transferase</keyword>
<keyword id="KW-0812">Transmembrane</keyword>
<keyword id="KW-1133">Transmembrane helix</keyword>
<evidence type="ECO:0000250" key="1"/>
<evidence type="ECO:0000250" key="2">
    <source>
        <dbReference type="UniProtKB" id="Q9Y2C3"/>
    </source>
</evidence>
<evidence type="ECO:0000255" key="3"/>
<evidence type="ECO:0000305" key="4"/>
<name>B3GT5_PANTR</name>
<feature type="chain" id="PRO_0000219167" description="Beta-1,3-galactosyltransferase 5">
    <location>
        <begin position="1"/>
        <end position="297" status="greater than"/>
    </location>
</feature>
<feature type="topological domain" description="Cytoplasmic" evidence="3">
    <location>
        <begin position="1"/>
        <end position="7"/>
    </location>
</feature>
<feature type="transmembrane region" description="Helical; Signal-anchor for type II membrane protein" evidence="3">
    <location>
        <begin position="8"/>
        <end position="28"/>
    </location>
</feature>
<feature type="topological domain" description="Lumenal" evidence="3">
    <location>
        <begin position="29"/>
        <end position="297" status="greater than"/>
    </location>
</feature>
<feature type="glycosylation site" description="N-linked (GlcNAc...) asparagine" evidence="3">
    <location>
        <position position="130"/>
    </location>
</feature>
<feature type="glycosylation site" description="N-linked (GlcNAc...) asparagine" evidence="3">
    <location>
        <position position="174"/>
    </location>
</feature>
<feature type="glycosylation site" description="N-linked (GlcNAc...) asparagine" evidence="3">
    <location>
        <position position="231"/>
    </location>
</feature>
<feature type="non-terminal residue">
    <location>
        <position position="297"/>
    </location>
</feature>
<reference key="1">
    <citation type="journal article" date="2004" name="Mol. Biol. Evol.">
        <title>Human-specific amino acid changes found in 103 protein-coding genes.</title>
        <authorList>
            <person name="Kitano T."/>
            <person name="Liu Y.-H."/>
            <person name="Ueda S."/>
            <person name="Saitou N."/>
        </authorList>
    </citation>
    <scope>NUCLEOTIDE SEQUENCE [GENOMIC DNA]</scope>
</reference>
<gene>
    <name type="primary">B3GALT5</name>
</gene>
<comment type="function">
    <text evidence="1">Catalyzes the transfer of Gal to GlcNAc-based acceptors with a preference for the core3 O-linked glycan GlcNAc(beta1,3)GalNAc structure. Can use glycolipid LC3Cer as an efficient acceptor (By similarity).</text>
</comment>
<comment type="catalytic activity">
    <reaction evidence="2">
        <text>a globoside Gb4Cer (d18:1(4E)) + UDP-alpha-D-galactose = a globoside GalGb4Cer (d18:1(4E)) + UDP + H(+)</text>
        <dbReference type="Rhea" id="RHEA:41996"/>
        <dbReference type="ChEBI" id="CHEBI:15378"/>
        <dbReference type="ChEBI" id="CHEBI:18259"/>
        <dbReference type="ChEBI" id="CHEBI:58223"/>
        <dbReference type="ChEBI" id="CHEBI:62571"/>
        <dbReference type="ChEBI" id="CHEBI:66914"/>
    </reaction>
    <physiologicalReaction direction="left-to-right" evidence="2">
        <dbReference type="Rhea" id="RHEA:41997"/>
    </physiologicalReaction>
</comment>
<comment type="pathway">
    <text>Protein modification; protein glycosylation.</text>
</comment>
<comment type="subcellular location">
    <subcellularLocation>
        <location evidence="4">Golgi apparatus membrane</location>
        <topology evidence="4">Single-pass type II membrane protein</topology>
    </subcellularLocation>
</comment>
<comment type="similarity">
    <text evidence="4">Belongs to the glycosyltransferase 31 family.</text>
</comment>
<organism>
    <name type="scientific">Pan troglodytes</name>
    <name type="common">Chimpanzee</name>
    <dbReference type="NCBI Taxonomy" id="9598"/>
    <lineage>
        <taxon>Eukaryota</taxon>
        <taxon>Metazoa</taxon>
        <taxon>Chordata</taxon>
        <taxon>Craniata</taxon>
        <taxon>Vertebrata</taxon>
        <taxon>Euteleostomi</taxon>
        <taxon>Mammalia</taxon>
        <taxon>Eutheria</taxon>
        <taxon>Euarchontoglires</taxon>
        <taxon>Primates</taxon>
        <taxon>Haplorrhini</taxon>
        <taxon>Catarrhini</taxon>
        <taxon>Hominidae</taxon>
        <taxon>Pan</taxon>
    </lineage>
</organism>
<sequence>MAFPKMRLMYVCLLVLGALCVYFSMYSLNLFKEQSFVYKKDGNFLKLPDTDCRQTPPFLVLLVTSSHRQLAERMAIRQTWGKERTVKGKQLKTFFLLGTTSSAAETKEVDQESQRHGDIIQKDFLDVYYNLTLKTMMGIEWVHRFCPQAAFVMKTDSDMFINVDYLTELLLKKNRTTRFFTGFLKLNEFPIRQPFSKWFVSKSEYPWDRYPPFCSGTGYVFSGDVASQVYNVSESVPYIKLEDVFVGLCLERLNIRLEELHSQPTFFPGGLRFSVCRFRRIVACHFIKPRTLLDYWQ</sequence>
<proteinExistence type="inferred from homology"/>
<accession>Q9N295</accession>
<dbReference type="EC" id="2.4.1.-"/>
<dbReference type="EMBL" id="AB041414">
    <property type="protein sequence ID" value="BAA94499.1"/>
    <property type="molecule type" value="Genomic_DNA"/>
</dbReference>
<dbReference type="SMR" id="Q9N295"/>
<dbReference type="STRING" id="9598.ENSPTRP00000068746"/>
<dbReference type="CAZy" id="GT31">
    <property type="family name" value="Glycosyltransferase Family 31"/>
</dbReference>
<dbReference type="GlyCosmos" id="Q9N295">
    <property type="glycosylation" value="3 sites, No reported glycans"/>
</dbReference>
<dbReference type="PaxDb" id="9598-ENSPTRP00000053952"/>
<dbReference type="eggNOG" id="KOG2287">
    <property type="taxonomic scope" value="Eukaryota"/>
</dbReference>
<dbReference type="InParanoid" id="Q9N295"/>
<dbReference type="UniPathway" id="UPA00378"/>
<dbReference type="Proteomes" id="UP000002277">
    <property type="component" value="Unplaced"/>
</dbReference>
<dbReference type="GO" id="GO:0000139">
    <property type="term" value="C:Golgi membrane"/>
    <property type="evidence" value="ECO:0000318"/>
    <property type="project" value="GO_Central"/>
</dbReference>
<dbReference type="GO" id="GO:0008499">
    <property type="term" value="F:N-acetyl-beta-D-glucosaminide beta-(1,3)-galactosyltransferase activity"/>
    <property type="evidence" value="ECO:0000318"/>
    <property type="project" value="GO_Central"/>
</dbReference>
<dbReference type="GO" id="GO:0006629">
    <property type="term" value="P:lipid metabolic process"/>
    <property type="evidence" value="ECO:0007669"/>
    <property type="project" value="UniProtKB-KW"/>
</dbReference>
<dbReference type="GO" id="GO:0006493">
    <property type="term" value="P:protein O-linked glycosylation"/>
    <property type="evidence" value="ECO:0000318"/>
    <property type="project" value="GO_Central"/>
</dbReference>
<dbReference type="FunFam" id="3.90.550.50:FF:000001">
    <property type="entry name" value="Hexosyltransferase"/>
    <property type="match status" value="1"/>
</dbReference>
<dbReference type="Gene3D" id="3.90.550.50">
    <property type="match status" value="1"/>
</dbReference>
<dbReference type="InterPro" id="IPR002659">
    <property type="entry name" value="Glyco_trans_31"/>
</dbReference>
<dbReference type="PANTHER" id="PTHR11214:SF265">
    <property type="entry name" value="BETA-1,3-GALACTOSYLTRANSFERASE 5"/>
    <property type="match status" value="1"/>
</dbReference>
<dbReference type="PANTHER" id="PTHR11214">
    <property type="entry name" value="BETA-1,3-N-ACETYLGLUCOSAMINYLTRANSFERASE"/>
    <property type="match status" value="1"/>
</dbReference>
<dbReference type="Pfam" id="PF01762">
    <property type="entry name" value="Galactosyl_T"/>
    <property type="match status" value="1"/>
</dbReference>